<comment type="function">
    <text evidence="1">Inhibits the proliferation of CD4 and CD8 T-cells activated by anti-CD3 antibodies, T-cell metabolism and IL2 and IFNG secretion.</text>
</comment>
<comment type="subcellular location">
    <subcellularLocation>
        <location evidence="5">Membrane</location>
        <topology evidence="5">Single-pass type I membrane protein</topology>
    </subcellularLocation>
</comment>
<comment type="PTM">
    <text evidence="1">N-glycosylated.</text>
</comment>
<comment type="similarity">
    <text evidence="5">Belongs to the immunoglobulin superfamily. BTN/MOG family.</text>
</comment>
<name>BT2A2_PONAB</name>
<organism>
    <name type="scientific">Pongo abelii</name>
    <name type="common">Sumatran orangutan</name>
    <name type="synonym">Pongo pygmaeus abelii</name>
    <dbReference type="NCBI Taxonomy" id="9601"/>
    <lineage>
        <taxon>Eukaryota</taxon>
        <taxon>Metazoa</taxon>
        <taxon>Chordata</taxon>
        <taxon>Craniata</taxon>
        <taxon>Vertebrata</taxon>
        <taxon>Euteleostomi</taxon>
        <taxon>Mammalia</taxon>
        <taxon>Eutheria</taxon>
        <taxon>Euarchontoglires</taxon>
        <taxon>Primates</taxon>
        <taxon>Haplorrhini</taxon>
        <taxon>Catarrhini</taxon>
        <taxon>Hominidae</taxon>
        <taxon>Pongo</taxon>
    </lineage>
</organism>
<sequence length="528" mass="60060">MESAAALHFSRPASLLLLLLLSLCALVSAQVTVVGPTDPILGMVGENTTLRCHLSPEKNAEDMEVRWFRSQFSPAVFVYKGGRERTEEQMEEYRGRTTFVSKDISRGSVALVIHNITAQENGTYRCYFQEGRSYDEAILHLIVAGLGSKPLIEMRGHEDGGIRLECISRGWYPKPLTVWRDPYGGVVPALKEVSMPDADSLFMVTTAVIIRDKSVRNMFCSINNTLLSQKKESVIFIPESFMPSVSPCAVALPIVVVILMILFAVCMYWINKLQKEKKILSGEKEFERETREIAVKELEKERVQKEEELQVKEKLQEELRWRRTFLHAVDVVLDPDTAHPDLFLSEDRRSVRRRPFRHLGESMPDNPERFNSQPCVLGRESFASGKHYWEVEVENVIEWTVGVCRDSVERKGEVLLIPQNGFWTLEMHKSQYRAVSSPDRIIPLKESLCRVGVFLDYEAGDVSFYNMRDRSHIYTCPRSAFSVPVRPFFRLGCEDSPIFICPALTGANGVTVPEEGLTLHRVGTHQSL</sequence>
<accession>Q5R7W8</accession>
<feature type="signal peptide" evidence="2">
    <location>
        <begin position="1"/>
        <end position="29"/>
    </location>
</feature>
<feature type="chain" id="PRO_0000367055" description="Butyrophilin subfamily 2 member A2">
    <location>
        <begin position="30"/>
        <end position="528"/>
    </location>
</feature>
<feature type="topological domain" description="Extracellular" evidence="2">
    <location>
        <begin position="30"/>
        <end position="249"/>
    </location>
</feature>
<feature type="transmembrane region" description="Helical" evidence="2">
    <location>
        <begin position="250"/>
        <end position="270"/>
    </location>
</feature>
<feature type="topological domain" description="Cytoplasmic" evidence="2">
    <location>
        <begin position="271"/>
        <end position="528"/>
    </location>
</feature>
<feature type="domain" description="Ig-like V-type">
    <location>
        <begin position="31"/>
        <end position="142"/>
    </location>
</feature>
<feature type="domain" description="Ig-like C2-type">
    <location>
        <begin position="150"/>
        <end position="232"/>
    </location>
</feature>
<feature type="domain" description="B30.2/SPRY" evidence="4">
    <location>
        <begin position="311"/>
        <end position="507"/>
    </location>
</feature>
<feature type="coiled-coil region" evidence="2">
    <location>
        <begin position="270"/>
        <end position="320"/>
    </location>
</feature>
<feature type="glycosylation site" description="N-linked (GlcNAc...) asparagine" evidence="2">
    <location>
        <position position="47"/>
    </location>
</feature>
<feature type="glycosylation site" description="N-linked (GlcNAc...) asparagine" evidence="2">
    <location>
        <position position="115"/>
    </location>
</feature>
<feature type="glycosylation site" description="N-linked (GlcNAc...) asparagine" evidence="2">
    <location>
        <position position="121"/>
    </location>
</feature>
<feature type="disulfide bond" evidence="3">
    <location>
        <begin position="52"/>
        <end position="126"/>
    </location>
</feature>
<reference key="1">
    <citation type="submission" date="2004-11" db="EMBL/GenBank/DDBJ databases">
        <authorList>
            <consortium name="The German cDNA consortium"/>
        </authorList>
    </citation>
    <scope>NUCLEOTIDE SEQUENCE [LARGE SCALE MRNA]</scope>
    <source>
        <tissue>Brain cortex</tissue>
    </source>
</reference>
<gene>
    <name type="primary">BTN2A2</name>
</gene>
<keyword id="KW-0175">Coiled coil</keyword>
<keyword id="KW-1015">Disulfide bond</keyword>
<keyword id="KW-0325">Glycoprotein</keyword>
<keyword id="KW-0393">Immunoglobulin domain</keyword>
<keyword id="KW-0472">Membrane</keyword>
<keyword id="KW-1185">Reference proteome</keyword>
<keyword id="KW-0732">Signal</keyword>
<keyword id="KW-0812">Transmembrane</keyword>
<keyword id="KW-1133">Transmembrane helix</keyword>
<proteinExistence type="evidence at transcript level"/>
<evidence type="ECO:0000250" key="1"/>
<evidence type="ECO:0000255" key="2"/>
<evidence type="ECO:0000255" key="3">
    <source>
        <dbReference type="PROSITE-ProRule" id="PRU00114"/>
    </source>
</evidence>
<evidence type="ECO:0000255" key="4">
    <source>
        <dbReference type="PROSITE-ProRule" id="PRU00548"/>
    </source>
</evidence>
<evidence type="ECO:0000305" key="5"/>
<dbReference type="EMBL" id="CR859991">
    <property type="protein sequence ID" value="CAH92142.1"/>
    <property type="molecule type" value="mRNA"/>
</dbReference>
<dbReference type="RefSeq" id="NP_001126252.1">
    <property type="nucleotide sequence ID" value="NM_001132780.1"/>
</dbReference>
<dbReference type="SMR" id="Q5R7W8"/>
<dbReference type="FunCoup" id="Q5R7W8">
    <property type="interactions" value="757"/>
</dbReference>
<dbReference type="STRING" id="9601.ENSPPYP00000018261"/>
<dbReference type="GlyCosmos" id="Q5R7W8">
    <property type="glycosylation" value="3 sites, No reported glycans"/>
</dbReference>
<dbReference type="GeneID" id="100173224"/>
<dbReference type="KEGG" id="pon:100173224"/>
<dbReference type="CTD" id="11120"/>
<dbReference type="eggNOG" id="ENOG502QSRZ">
    <property type="taxonomic scope" value="Eukaryota"/>
</dbReference>
<dbReference type="InParanoid" id="Q5R7W8"/>
<dbReference type="OrthoDB" id="9986391at2759"/>
<dbReference type="Proteomes" id="UP000001595">
    <property type="component" value="Unplaced"/>
</dbReference>
<dbReference type="GO" id="GO:0009897">
    <property type="term" value="C:external side of plasma membrane"/>
    <property type="evidence" value="ECO:0007669"/>
    <property type="project" value="TreeGrafter"/>
</dbReference>
<dbReference type="GO" id="GO:0005102">
    <property type="term" value="F:signaling receptor binding"/>
    <property type="evidence" value="ECO:0007669"/>
    <property type="project" value="TreeGrafter"/>
</dbReference>
<dbReference type="GO" id="GO:0046007">
    <property type="term" value="P:negative regulation of activated T cell proliferation"/>
    <property type="evidence" value="ECO:0000250"/>
    <property type="project" value="UniProtKB"/>
</dbReference>
<dbReference type="GO" id="GO:0001818">
    <property type="term" value="P:negative regulation of cytokine production"/>
    <property type="evidence" value="ECO:0000250"/>
    <property type="project" value="UniProtKB"/>
</dbReference>
<dbReference type="GO" id="GO:0050852">
    <property type="term" value="P:T cell receptor signaling pathway"/>
    <property type="evidence" value="ECO:0007669"/>
    <property type="project" value="TreeGrafter"/>
</dbReference>
<dbReference type="CDD" id="cd05713">
    <property type="entry name" value="IgV_MOG_like"/>
    <property type="match status" value="1"/>
</dbReference>
<dbReference type="FunFam" id="2.60.120.920:FF:000004">
    <property type="entry name" value="Butyrophilin subfamily 1 member A1"/>
    <property type="match status" value="1"/>
</dbReference>
<dbReference type="FunFam" id="2.60.40.10:FF:000088">
    <property type="entry name" value="Butyrophilin subfamily 1 member A1"/>
    <property type="match status" value="1"/>
</dbReference>
<dbReference type="FunFam" id="2.60.40.10:FF:000208">
    <property type="entry name" value="Butyrophilin subfamily 1 member A1"/>
    <property type="match status" value="1"/>
</dbReference>
<dbReference type="Gene3D" id="2.60.120.920">
    <property type="match status" value="1"/>
</dbReference>
<dbReference type="Gene3D" id="2.60.40.10">
    <property type="entry name" value="Immunoglobulins"/>
    <property type="match status" value="2"/>
</dbReference>
<dbReference type="InterPro" id="IPR001870">
    <property type="entry name" value="B30.2/SPRY"/>
</dbReference>
<dbReference type="InterPro" id="IPR043136">
    <property type="entry name" value="B30.2/SPRY_sf"/>
</dbReference>
<dbReference type="InterPro" id="IPR053896">
    <property type="entry name" value="BTN3A2-like_Ig-C"/>
</dbReference>
<dbReference type="InterPro" id="IPR003879">
    <property type="entry name" value="Butyrophylin_SPRY"/>
</dbReference>
<dbReference type="InterPro" id="IPR013320">
    <property type="entry name" value="ConA-like_dom_sf"/>
</dbReference>
<dbReference type="InterPro" id="IPR007110">
    <property type="entry name" value="Ig-like_dom"/>
</dbReference>
<dbReference type="InterPro" id="IPR036179">
    <property type="entry name" value="Ig-like_dom_sf"/>
</dbReference>
<dbReference type="InterPro" id="IPR013783">
    <property type="entry name" value="Ig-like_fold"/>
</dbReference>
<dbReference type="InterPro" id="IPR003599">
    <property type="entry name" value="Ig_sub"/>
</dbReference>
<dbReference type="InterPro" id="IPR013106">
    <property type="entry name" value="Ig_V-set"/>
</dbReference>
<dbReference type="InterPro" id="IPR050504">
    <property type="entry name" value="IgSF_BTN/MOG"/>
</dbReference>
<dbReference type="InterPro" id="IPR006574">
    <property type="entry name" value="PRY"/>
</dbReference>
<dbReference type="InterPro" id="IPR003877">
    <property type="entry name" value="SPRY_dom"/>
</dbReference>
<dbReference type="PANTHER" id="PTHR24100">
    <property type="entry name" value="BUTYROPHILIN"/>
    <property type="match status" value="1"/>
</dbReference>
<dbReference type="PANTHER" id="PTHR24100:SF79">
    <property type="entry name" value="BUTYROPHILIN SUBFAMILY 2 MEMBER A1"/>
    <property type="match status" value="1"/>
</dbReference>
<dbReference type="Pfam" id="PF22705">
    <property type="entry name" value="C2-set_3"/>
    <property type="match status" value="1"/>
</dbReference>
<dbReference type="Pfam" id="PF13765">
    <property type="entry name" value="PRY"/>
    <property type="match status" value="1"/>
</dbReference>
<dbReference type="Pfam" id="PF00622">
    <property type="entry name" value="SPRY"/>
    <property type="match status" value="1"/>
</dbReference>
<dbReference type="Pfam" id="PF07686">
    <property type="entry name" value="V-set"/>
    <property type="match status" value="1"/>
</dbReference>
<dbReference type="PRINTS" id="PR01407">
    <property type="entry name" value="BUTYPHLNCDUF"/>
</dbReference>
<dbReference type="SMART" id="SM00409">
    <property type="entry name" value="IG"/>
    <property type="match status" value="1"/>
</dbReference>
<dbReference type="SMART" id="SM00406">
    <property type="entry name" value="IGv"/>
    <property type="match status" value="1"/>
</dbReference>
<dbReference type="SMART" id="SM00589">
    <property type="entry name" value="PRY"/>
    <property type="match status" value="1"/>
</dbReference>
<dbReference type="SMART" id="SM00449">
    <property type="entry name" value="SPRY"/>
    <property type="match status" value="1"/>
</dbReference>
<dbReference type="SUPFAM" id="SSF49899">
    <property type="entry name" value="Concanavalin A-like lectins/glucanases"/>
    <property type="match status" value="1"/>
</dbReference>
<dbReference type="SUPFAM" id="SSF48726">
    <property type="entry name" value="Immunoglobulin"/>
    <property type="match status" value="2"/>
</dbReference>
<dbReference type="PROSITE" id="PS50188">
    <property type="entry name" value="B302_SPRY"/>
    <property type="match status" value="1"/>
</dbReference>
<dbReference type="PROSITE" id="PS50835">
    <property type="entry name" value="IG_LIKE"/>
    <property type="match status" value="1"/>
</dbReference>
<protein>
    <recommendedName>
        <fullName>Butyrophilin subfamily 2 member A2</fullName>
    </recommendedName>
</protein>